<dbReference type="EMBL" id="M18621">
    <property type="protein sequence ID" value="AAA30668.1"/>
    <property type="status" value="ALT_INIT"/>
    <property type="molecule type" value="mRNA"/>
</dbReference>
<dbReference type="EMBL" id="DQ515198">
    <property type="protein sequence ID" value="ABF72466.1"/>
    <property type="molecule type" value="mRNA"/>
</dbReference>
<dbReference type="EMBL" id="BC102381">
    <property type="protein sequence ID" value="AAI02382.1"/>
    <property type="molecule type" value="mRNA"/>
</dbReference>
<dbReference type="PIR" id="A01420">
    <property type="entry name" value="UNBO"/>
</dbReference>
<dbReference type="RefSeq" id="NP_776370.2">
    <property type="nucleotide sequence ID" value="NM_173945.4"/>
</dbReference>
<dbReference type="FunCoup" id="P01156">
    <property type="interactions" value="79"/>
</dbReference>
<dbReference type="STRING" id="9913.ENSBTAP00000006980"/>
<dbReference type="PaxDb" id="9913-ENSBTAP00000006980"/>
<dbReference type="Ensembl" id="ENSBTAT00000006980.3">
    <property type="protein sequence ID" value="ENSBTAP00000006980.2"/>
    <property type="gene ID" value="ENSBTAG00000005305.4"/>
</dbReference>
<dbReference type="GeneID" id="280881"/>
<dbReference type="KEGG" id="bta:280881"/>
<dbReference type="CTD" id="4922"/>
<dbReference type="VEuPathDB" id="HostDB:ENSBTAG00000005305"/>
<dbReference type="VGNC" id="VGNC:32311">
    <property type="gene designation" value="NTS"/>
</dbReference>
<dbReference type="eggNOG" id="ENOG502RYW6">
    <property type="taxonomic scope" value="Eukaryota"/>
</dbReference>
<dbReference type="GeneTree" id="ENSGT00640000091574"/>
<dbReference type="HOGENOM" id="CLU_133874_0_0_1"/>
<dbReference type="InParanoid" id="P01156"/>
<dbReference type="OMA" id="ISSWKMT"/>
<dbReference type="OrthoDB" id="9929102at2759"/>
<dbReference type="TreeFam" id="TF330765"/>
<dbReference type="Reactome" id="R-BTA-375276">
    <property type="pathway name" value="Peptide ligand-binding receptors"/>
</dbReference>
<dbReference type="Reactome" id="R-BTA-416476">
    <property type="pathway name" value="G alpha (q) signalling events"/>
</dbReference>
<dbReference type="Proteomes" id="UP000009136">
    <property type="component" value="Chromosome 5"/>
</dbReference>
<dbReference type="Bgee" id="ENSBTAG00000005305">
    <property type="expression patterns" value="Expressed in fornix of vagina and 79 other cell types or tissues"/>
</dbReference>
<dbReference type="GO" id="GO:0043679">
    <property type="term" value="C:axon terminus"/>
    <property type="evidence" value="ECO:0000318"/>
    <property type="project" value="GO_Central"/>
</dbReference>
<dbReference type="GO" id="GO:0005576">
    <property type="term" value="C:extracellular region"/>
    <property type="evidence" value="ECO:0007669"/>
    <property type="project" value="UniProtKB-SubCell"/>
</dbReference>
<dbReference type="GO" id="GO:0030133">
    <property type="term" value="C:transport vesicle"/>
    <property type="evidence" value="ECO:0007669"/>
    <property type="project" value="UniProtKB-SubCell"/>
</dbReference>
<dbReference type="GO" id="GO:0005184">
    <property type="term" value="F:neuropeptide hormone activity"/>
    <property type="evidence" value="ECO:0007669"/>
    <property type="project" value="InterPro"/>
</dbReference>
<dbReference type="GO" id="GO:0071855">
    <property type="term" value="F:neuropeptide receptor binding"/>
    <property type="evidence" value="ECO:0007669"/>
    <property type="project" value="Ensembl"/>
</dbReference>
<dbReference type="GO" id="GO:0097746">
    <property type="term" value="P:blood vessel diameter maintenance"/>
    <property type="evidence" value="ECO:0007669"/>
    <property type="project" value="UniProtKB-KW"/>
</dbReference>
<dbReference type="GO" id="GO:0010629">
    <property type="term" value="P:negative regulation of gene expression"/>
    <property type="evidence" value="ECO:0007669"/>
    <property type="project" value="Ensembl"/>
</dbReference>
<dbReference type="GO" id="GO:0007218">
    <property type="term" value="P:neuropeptide signaling pathway"/>
    <property type="evidence" value="ECO:0007669"/>
    <property type="project" value="Ensembl"/>
</dbReference>
<dbReference type="GO" id="GO:0010628">
    <property type="term" value="P:positive regulation of gene expression"/>
    <property type="evidence" value="ECO:0007669"/>
    <property type="project" value="Ensembl"/>
</dbReference>
<dbReference type="GO" id="GO:0051897">
    <property type="term" value="P:positive regulation of phosphatidylinositol 3-kinase/protein kinase B signal transduction"/>
    <property type="evidence" value="ECO:0007669"/>
    <property type="project" value="Ensembl"/>
</dbReference>
<dbReference type="InterPro" id="IPR008055">
    <property type="entry name" value="NeurotensiN"/>
</dbReference>
<dbReference type="PANTHER" id="PTHR15356">
    <property type="entry name" value="NEUROTENSIN/NEUROMEDIN N"/>
    <property type="match status" value="1"/>
</dbReference>
<dbReference type="PANTHER" id="PTHR15356:SF0">
    <property type="entry name" value="NEUROTENSIN_NEUROMEDIN N"/>
    <property type="match status" value="1"/>
</dbReference>
<dbReference type="Pfam" id="PF07421">
    <property type="entry name" value="Pro-NT_NN"/>
    <property type="match status" value="1"/>
</dbReference>
<dbReference type="PRINTS" id="PR01668">
    <property type="entry name" value="NEUROTENSIN"/>
</dbReference>
<name>NEUT_BOVIN</name>
<sequence>MMAGMKIQLVCMILLAFSSWSLCSDSEEEMKALETDLLTNMHTSKISKASVPSWKMSLLNVCSLINNLNSQAEETGEFHEEELITRRKFPAALDGFSLEAMLTIYQLQKICHSRAFQHWELIQEDILDAGNDKNEKEEVIKRKIPYILKRQLYENKPRRPYILKRGSYYY</sequence>
<gene>
    <name type="primary">NTS</name>
</gene>
<proteinExistence type="evidence at protein level"/>
<organism>
    <name type="scientific">Bos taurus</name>
    <name type="common">Bovine</name>
    <dbReference type="NCBI Taxonomy" id="9913"/>
    <lineage>
        <taxon>Eukaryota</taxon>
        <taxon>Metazoa</taxon>
        <taxon>Chordata</taxon>
        <taxon>Craniata</taxon>
        <taxon>Vertebrata</taxon>
        <taxon>Euteleostomi</taxon>
        <taxon>Mammalia</taxon>
        <taxon>Eutheria</taxon>
        <taxon>Laurasiatheria</taxon>
        <taxon>Artiodactyla</taxon>
        <taxon>Ruminantia</taxon>
        <taxon>Pecora</taxon>
        <taxon>Bovidae</taxon>
        <taxon>Bovinae</taxon>
        <taxon>Bos</taxon>
    </lineage>
</organism>
<reference key="1">
    <citation type="journal article" date="1988" name="J. Biol. Chem.">
        <title>The rat gene encoding neurotensin and neuromedin N. Structure, tissue-specific expression, and evolution of exon sequences.</title>
        <authorList>
            <person name="Kislauskis E."/>
            <person name="Bullock B."/>
            <person name="McNeil S."/>
            <person name="Dobner P.R."/>
        </authorList>
    </citation>
    <scope>NUCLEOTIDE SEQUENCE [MRNA]</scope>
</reference>
<reference key="2">
    <citation type="submission" date="2006-04" db="EMBL/GenBank/DDBJ databases">
        <title>Polymorphism identification in the neurotensin gene of cattle.</title>
        <authorList>
            <person name="Reddick K.D."/>
            <person name="Schmutz S.M."/>
        </authorList>
    </citation>
    <scope>NUCLEOTIDE SEQUENCE [MRNA]</scope>
    <source>
        <tissue>Skin</tissue>
    </source>
</reference>
<reference key="3">
    <citation type="submission" date="2005-08" db="EMBL/GenBank/DDBJ databases">
        <authorList>
            <consortium name="NIH - Mammalian Gene Collection (MGC) project"/>
        </authorList>
    </citation>
    <scope>NUCLEOTIDE SEQUENCE [LARGE SCALE MRNA]</scope>
    <source>
        <strain>Crossbred X Angus</strain>
        <tissue>Ileum</tissue>
    </source>
</reference>
<reference key="4">
    <citation type="journal article" date="1975" name="J. Biol. Chem.">
        <title>The amino acid sequence of a hypothalamic peptide, neurotensin.</title>
        <authorList>
            <person name="Carraway R."/>
            <person name="Leeman S.E."/>
        </authorList>
    </citation>
    <scope>PROTEIN SEQUENCE OF 151-163</scope>
    <source>
        <tissue>Hypothalamus</tissue>
    </source>
</reference>
<reference key="5">
    <citation type="journal article" date="1975" name="J. Biol. Chem.">
        <title>The synthesis of neurotensin.</title>
        <authorList>
            <person name="Carraway R."/>
            <person name="Leeman S.E."/>
        </authorList>
    </citation>
    <scope>SYNTHESIS OF NEUROTENSIN</scope>
</reference>
<feature type="signal peptide" evidence="2">
    <location>
        <begin position="1"/>
        <end position="23"/>
    </location>
</feature>
<feature type="chain" id="PRO_0000019513" description="Large neuromedin N">
    <location>
        <begin position="24"/>
        <end position="148"/>
    </location>
</feature>
<feature type="peptide" id="PRO_0000019514" description="Neuromedin N">
    <location>
        <begin position="143"/>
        <end position="148"/>
    </location>
</feature>
<feature type="peptide" id="PRO_0000019515" description="Neurotensin">
    <location>
        <begin position="151"/>
        <end position="163"/>
    </location>
</feature>
<feature type="peptide" id="PRO_0000019516" description="Tail peptide" evidence="2">
    <location>
        <begin position="166"/>
        <end position="170"/>
    </location>
</feature>
<feature type="site" description="Cleavage; by MME" evidence="1">
    <location>
        <begin position="160"/>
        <end position="161"/>
    </location>
</feature>
<feature type="site" description="Cleavage; by ACE and MME" evidence="1">
    <location>
        <begin position="161"/>
        <end position="162"/>
    </location>
</feature>
<protein>
    <recommendedName>
        <fullName>Neurotensin/neuromedin N</fullName>
    </recommendedName>
    <component>
        <recommendedName>
            <fullName>Large neuromedin N</fullName>
        </recommendedName>
        <alternativeName>
            <fullName>NmN-125</fullName>
        </alternativeName>
    </component>
    <component>
        <recommendedName>
            <fullName>Neuromedin N</fullName>
            <shortName>NN</shortName>
            <shortName>NmN</shortName>
        </recommendedName>
    </component>
    <component>
        <recommendedName>
            <fullName>Neurotensin</fullName>
            <shortName>NT</shortName>
        </recommendedName>
    </component>
    <component>
        <recommendedName>
            <fullName>Tail peptide</fullName>
        </recommendedName>
    </component>
</protein>
<evidence type="ECO:0000250" key="1">
    <source>
        <dbReference type="UniProtKB" id="P30990"/>
    </source>
</evidence>
<evidence type="ECO:0000255" key="2"/>
<evidence type="ECO:0000305" key="3"/>
<keyword id="KW-0165">Cleavage on pair of basic residues</keyword>
<keyword id="KW-0968">Cytoplasmic vesicle</keyword>
<keyword id="KW-0903">Direct protein sequencing</keyword>
<keyword id="KW-1185">Reference proteome</keyword>
<keyword id="KW-0964">Secreted</keyword>
<keyword id="KW-0732">Signal</keyword>
<keyword id="KW-0838">Vasoactive</keyword>
<accession>P01156</accession>
<accession>Q3ZCG0</accession>
<comment type="function">
    <text>Neurotensin may play an endocrine or paracrine role in the regulation of fat metabolism. It causes contraction of smooth muscle.</text>
</comment>
<comment type="subunit">
    <text evidence="1">Interacts with NTSR1. Interacts with SORT1. Interacts with SORL1.</text>
</comment>
<comment type="subcellular location">
    <subcellularLocation>
        <location>Secreted</location>
    </subcellularLocation>
    <subcellularLocation>
        <location>Cytoplasmic vesicle</location>
        <location>Secretory vesicle</location>
    </subcellularLocation>
    <text>Packaged within secretory vesicles.</text>
</comment>
<comment type="tissue specificity">
    <text>Brain and gut.</text>
</comment>
<comment type="PTM">
    <molecule>Neurotensin</molecule>
    <text evidence="1">Neurotensin is cleaved and degraded by Angiotensin-converting enzyme (ACE) and neprilysin (MME).</text>
</comment>
<comment type="similarity">
    <text evidence="3">Belongs to the neurotensin family.</text>
</comment>
<comment type="sequence caution" evidence="3">
    <conflict type="erroneous initiation">
        <sequence resource="EMBL-CDS" id="AAA30668"/>
    </conflict>
</comment>